<accession>C5DGV3</accession>
<keyword id="KW-1003">Cell membrane</keyword>
<keyword id="KW-0472">Membrane</keyword>
<keyword id="KW-1185">Reference proteome</keyword>
<dbReference type="EMBL" id="CU928168">
    <property type="protein sequence ID" value="CAR22645.1"/>
    <property type="molecule type" value="Genomic_DNA"/>
</dbReference>
<dbReference type="RefSeq" id="XP_002553083.1">
    <property type="nucleotide sequence ID" value="XM_002553037.1"/>
</dbReference>
<dbReference type="SMR" id="C5DGV3"/>
<dbReference type="FunCoup" id="C5DGV3">
    <property type="interactions" value="73"/>
</dbReference>
<dbReference type="GeneID" id="8295319"/>
<dbReference type="KEGG" id="lth:KLTH0D08558g"/>
<dbReference type="eggNOG" id="ENOG502S8WV">
    <property type="taxonomic scope" value="Eukaryota"/>
</dbReference>
<dbReference type="HOGENOM" id="CLU_013228_1_0_1"/>
<dbReference type="InParanoid" id="C5DGV3"/>
<dbReference type="OMA" id="EHTFSGF"/>
<dbReference type="OrthoDB" id="4070583at2759"/>
<dbReference type="Proteomes" id="UP000002036">
    <property type="component" value="Chromosome D"/>
</dbReference>
<dbReference type="GO" id="GO:0005886">
    <property type="term" value="C:plasma membrane"/>
    <property type="evidence" value="ECO:0007669"/>
    <property type="project" value="UniProtKB-SubCell"/>
</dbReference>
<dbReference type="GO" id="GO:0070941">
    <property type="term" value="P:eisosome assembly"/>
    <property type="evidence" value="ECO:0007669"/>
    <property type="project" value="TreeGrafter"/>
</dbReference>
<dbReference type="InterPro" id="IPR024527">
    <property type="entry name" value="Eisosome1"/>
</dbReference>
<dbReference type="PANTHER" id="PTHR28298">
    <property type="entry name" value="EISOSOME PROTEIN 1"/>
    <property type="match status" value="1"/>
</dbReference>
<dbReference type="PANTHER" id="PTHR28298:SF1">
    <property type="entry name" value="EISOSOME PROTEIN 1"/>
    <property type="match status" value="1"/>
</dbReference>
<dbReference type="Pfam" id="PF12757">
    <property type="entry name" value="Eisosome1"/>
    <property type="match status" value="1"/>
</dbReference>
<protein>
    <recommendedName>
        <fullName>Eisosome protein 1</fullName>
    </recommendedName>
</protein>
<evidence type="ECO:0000250" key="1"/>
<evidence type="ECO:0000256" key="2">
    <source>
        <dbReference type="SAM" id="MobiDB-lite"/>
    </source>
</evidence>
<evidence type="ECO:0000305" key="3"/>
<name>EIS1_LACTC</name>
<feature type="chain" id="PRO_0000410801" description="Eisosome protein 1">
    <location>
        <begin position="1"/>
        <end position="930"/>
    </location>
</feature>
<feature type="region of interest" description="Disordered" evidence="2">
    <location>
        <begin position="1"/>
        <end position="34"/>
    </location>
</feature>
<feature type="region of interest" description="Disordered" evidence="2">
    <location>
        <begin position="98"/>
        <end position="143"/>
    </location>
</feature>
<feature type="region of interest" description="Disordered" evidence="2">
    <location>
        <begin position="516"/>
        <end position="544"/>
    </location>
</feature>
<feature type="region of interest" description="Disordered" evidence="2">
    <location>
        <begin position="637"/>
        <end position="930"/>
    </location>
</feature>
<feature type="compositionally biased region" description="Low complexity" evidence="2">
    <location>
        <begin position="13"/>
        <end position="27"/>
    </location>
</feature>
<feature type="compositionally biased region" description="Low complexity" evidence="2">
    <location>
        <begin position="98"/>
        <end position="129"/>
    </location>
</feature>
<feature type="compositionally biased region" description="Basic and acidic residues" evidence="2">
    <location>
        <begin position="523"/>
        <end position="542"/>
    </location>
</feature>
<feature type="compositionally biased region" description="Basic and acidic residues" evidence="2">
    <location>
        <begin position="676"/>
        <end position="691"/>
    </location>
</feature>
<feature type="compositionally biased region" description="Low complexity" evidence="2">
    <location>
        <begin position="703"/>
        <end position="715"/>
    </location>
</feature>
<feature type="compositionally biased region" description="Basic and acidic residues" evidence="2">
    <location>
        <begin position="721"/>
        <end position="731"/>
    </location>
</feature>
<feature type="compositionally biased region" description="Low complexity" evidence="2">
    <location>
        <begin position="740"/>
        <end position="755"/>
    </location>
</feature>
<feature type="compositionally biased region" description="Low complexity" evidence="2">
    <location>
        <begin position="781"/>
        <end position="804"/>
    </location>
</feature>
<feature type="compositionally biased region" description="Polar residues" evidence="2">
    <location>
        <begin position="849"/>
        <end position="866"/>
    </location>
</feature>
<feature type="compositionally biased region" description="Polar residues" evidence="2">
    <location>
        <begin position="883"/>
        <end position="894"/>
    </location>
</feature>
<feature type="compositionally biased region" description="Acidic residues" evidence="2">
    <location>
        <begin position="898"/>
        <end position="908"/>
    </location>
</feature>
<feature type="compositionally biased region" description="Basic and acidic residues" evidence="2">
    <location>
        <begin position="919"/>
        <end position="930"/>
    </location>
</feature>
<gene>
    <name type="primary">EIS1</name>
    <name type="ordered locus">KLTH0D08558g</name>
</gene>
<proteinExistence type="inferred from homology"/>
<reference key="1">
    <citation type="journal article" date="2009" name="Genome Res.">
        <title>Comparative genomics of protoploid Saccharomycetaceae.</title>
        <authorList>
            <consortium name="The Genolevures Consortium"/>
            <person name="Souciet J.-L."/>
            <person name="Dujon B."/>
            <person name="Gaillardin C."/>
            <person name="Johnston M."/>
            <person name="Baret P.V."/>
            <person name="Cliften P."/>
            <person name="Sherman D.J."/>
            <person name="Weissenbach J."/>
            <person name="Westhof E."/>
            <person name="Wincker P."/>
            <person name="Jubin C."/>
            <person name="Poulain J."/>
            <person name="Barbe V."/>
            <person name="Segurens B."/>
            <person name="Artiguenave F."/>
            <person name="Anthouard V."/>
            <person name="Vacherie B."/>
            <person name="Val M.-E."/>
            <person name="Fulton R.S."/>
            <person name="Minx P."/>
            <person name="Wilson R."/>
            <person name="Durrens P."/>
            <person name="Jean G."/>
            <person name="Marck C."/>
            <person name="Martin T."/>
            <person name="Nikolski M."/>
            <person name="Rolland T."/>
            <person name="Seret M.-L."/>
            <person name="Casaregola S."/>
            <person name="Despons L."/>
            <person name="Fairhead C."/>
            <person name="Fischer G."/>
            <person name="Lafontaine I."/>
            <person name="Leh V."/>
            <person name="Lemaire M."/>
            <person name="de Montigny J."/>
            <person name="Neuveglise C."/>
            <person name="Thierry A."/>
            <person name="Blanc-Lenfle I."/>
            <person name="Bleykasten C."/>
            <person name="Diffels J."/>
            <person name="Fritsch E."/>
            <person name="Frangeul L."/>
            <person name="Goeffon A."/>
            <person name="Jauniaux N."/>
            <person name="Kachouri-Lafond R."/>
            <person name="Payen C."/>
            <person name="Potier S."/>
            <person name="Pribylova L."/>
            <person name="Ozanne C."/>
            <person name="Richard G.-F."/>
            <person name="Sacerdot C."/>
            <person name="Straub M.-L."/>
            <person name="Talla E."/>
        </authorList>
    </citation>
    <scope>NUCLEOTIDE SEQUENCE [LARGE SCALE GENOMIC DNA]</scope>
    <source>
        <strain>ATCC 56472 / CBS 6340 / NRRL Y-8284</strain>
    </source>
</reference>
<comment type="function">
    <text evidence="1">Required for normal formation of eisosomes, large cytoplasmic protein assemblies that localize to specialized domains on plasma membrane and mark the site of endocytosis.</text>
</comment>
<comment type="subcellular location">
    <subcellularLocation>
        <location evidence="1">Cytoplasmic granule</location>
    </subcellularLocation>
    <subcellularLocation>
        <location evidence="1">Cell membrane</location>
        <topology evidence="1">Peripheral membrane protein</topology>
        <orientation evidence="1">Cytoplasmic side</orientation>
    </subcellularLocation>
    <text evidence="1">Localizes at the eisosomes.</text>
</comment>
<comment type="similarity">
    <text evidence="3">Belongs to the EIS1 family.</text>
</comment>
<sequence>MSLISAAADVNDASSTTSAGSVRSSAVYRKDGKPLSQEALYRAQQKYGVFQSPARQTGSGLKDSKMASDVAANLANNNRTTIEAYKRVLDSNASRAATAVSSRSRSSSVTSNATVVTTSSKSTNAAVKALSSKPVEQPVAPKKSNMNMSKILVGAEAAAEKRIGIRMKPEKIVYVPSKESGKAAERSMSLTPEIMDKLKTKGDYEAEAEVEADPKKYASKAAFAVRDFDPNEATEKELLEREKKKQAYFGMLTSPQVLSLARANAQVKLDQIDKAAPGSLYKNEEFNKLAVALAQKNSTKRSEHHGKINMGGGLWLTQADVQNIAQGLITPVLDEVDSRALQQRAIDEDIKQRKIDFKEQNAAWIELQRNKLSNDKMYSRETRMRHKRETEGLHARTERKFQDLCASKDSEVAEMEKALQNAKDSYAALQKQMEEDLEKERLRVEAEVAALKKEQEEDLKAARVEQEQELKPYVDDVKAAEAEHERLTAERDSLNKEIEELRASIESHKVRIEELDNEISDSAAKHEEEEGKREELTKHKEEFDQEVSEKFTVIAQAAKEKAQKSSEEARLKQLEVDAMINERQSELNSTELELKKEKLSLLEAMRNVTELKGEDKLDENRVKALIGMTSEEFIAENNKSVNVSDDKFEPFNEHTASTKSIKHEEGVLGEGGAKTNSDELPVKDSAEKSSEHLNSTAEKSIEPAKASSPYPAKPSMVDAVLPKDFKPEVKPKAKPAHKTPQQGAAAGGEPASAKSGVKRSPSLKQKFMGIIKGDTKSQSKPAAAATPVHPPATVKKAAPKKAAASSEADTPAKVSPAKDTAKTEIQKIAQGGPAPAPEPEHKTAPAVDNATTKSVSTLQKPTNSGIDKSEIHKIAQGGPAPTSGHSNHTRTSVYENGDNSDDEDELPDSSEAGENGIGADKKGSLFKEVF</sequence>
<organism>
    <name type="scientific">Lachancea thermotolerans (strain ATCC 56472 / CBS 6340 / NRRL Y-8284)</name>
    <name type="common">Yeast</name>
    <name type="synonym">Kluyveromyces thermotolerans</name>
    <dbReference type="NCBI Taxonomy" id="559295"/>
    <lineage>
        <taxon>Eukaryota</taxon>
        <taxon>Fungi</taxon>
        <taxon>Dikarya</taxon>
        <taxon>Ascomycota</taxon>
        <taxon>Saccharomycotina</taxon>
        <taxon>Saccharomycetes</taxon>
        <taxon>Saccharomycetales</taxon>
        <taxon>Saccharomycetaceae</taxon>
        <taxon>Lachancea</taxon>
    </lineage>
</organism>